<reference key="1">
    <citation type="journal article" date="2010" name="J. Bacteriol.">
        <title>Complete genome sequence of the aerobic facultative methanotroph Methylocella silvestris BL2.</title>
        <authorList>
            <person name="Chen Y."/>
            <person name="Crombie A."/>
            <person name="Rahman M.T."/>
            <person name="Dedysh S.N."/>
            <person name="Liesack W."/>
            <person name="Stott M.B."/>
            <person name="Alam M."/>
            <person name="Theisen A.R."/>
            <person name="Murrell J.C."/>
            <person name="Dunfield P.F."/>
        </authorList>
    </citation>
    <scope>NUCLEOTIDE SEQUENCE [LARGE SCALE GENOMIC DNA]</scope>
    <source>
        <strain>DSM 15510 / CIP 108128 / LMG 27833 / NCIMB 13906 / BL2</strain>
    </source>
</reference>
<dbReference type="EC" id="2.4.99.17" evidence="1"/>
<dbReference type="EMBL" id="CP001280">
    <property type="protein sequence ID" value="ACK52443.1"/>
    <property type="molecule type" value="Genomic_DNA"/>
</dbReference>
<dbReference type="RefSeq" id="WP_012592512.1">
    <property type="nucleotide sequence ID" value="NC_011666.1"/>
</dbReference>
<dbReference type="SMR" id="B8EIV1"/>
<dbReference type="STRING" id="395965.Msil_3554"/>
<dbReference type="KEGG" id="msl:Msil_3554"/>
<dbReference type="eggNOG" id="COG0809">
    <property type="taxonomic scope" value="Bacteria"/>
</dbReference>
<dbReference type="HOGENOM" id="CLU_039110_1_1_5"/>
<dbReference type="OrthoDB" id="9805933at2"/>
<dbReference type="UniPathway" id="UPA00392"/>
<dbReference type="Proteomes" id="UP000002257">
    <property type="component" value="Chromosome"/>
</dbReference>
<dbReference type="GO" id="GO:0005737">
    <property type="term" value="C:cytoplasm"/>
    <property type="evidence" value="ECO:0007669"/>
    <property type="project" value="UniProtKB-SubCell"/>
</dbReference>
<dbReference type="GO" id="GO:0051075">
    <property type="term" value="F:S-adenosylmethionine:tRNA ribosyltransferase-isomerase activity"/>
    <property type="evidence" value="ECO:0007669"/>
    <property type="project" value="UniProtKB-EC"/>
</dbReference>
<dbReference type="GO" id="GO:0008616">
    <property type="term" value="P:queuosine biosynthetic process"/>
    <property type="evidence" value="ECO:0007669"/>
    <property type="project" value="UniProtKB-UniRule"/>
</dbReference>
<dbReference type="GO" id="GO:0002099">
    <property type="term" value="P:tRNA wobble guanine modification"/>
    <property type="evidence" value="ECO:0007669"/>
    <property type="project" value="TreeGrafter"/>
</dbReference>
<dbReference type="FunFam" id="3.40.1780.10:FF:000001">
    <property type="entry name" value="S-adenosylmethionine:tRNA ribosyltransferase-isomerase"/>
    <property type="match status" value="1"/>
</dbReference>
<dbReference type="Gene3D" id="2.40.10.240">
    <property type="entry name" value="QueA-like"/>
    <property type="match status" value="1"/>
</dbReference>
<dbReference type="Gene3D" id="3.40.1780.10">
    <property type="entry name" value="QueA-like"/>
    <property type="match status" value="1"/>
</dbReference>
<dbReference type="HAMAP" id="MF_00113">
    <property type="entry name" value="QueA"/>
    <property type="match status" value="1"/>
</dbReference>
<dbReference type="InterPro" id="IPR003699">
    <property type="entry name" value="QueA"/>
</dbReference>
<dbReference type="InterPro" id="IPR042118">
    <property type="entry name" value="QueA_dom1"/>
</dbReference>
<dbReference type="InterPro" id="IPR042119">
    <property type="entry name" value="QueA_dom2"/>
</dbReference>
<dbReference type="InterPro" id="IPR036100">
    <property type="entry name" value="QueA_sf"/>
</dbReference>
<dbReference type="NCBIfam" id="NF001140">
    <property type="entry name" value="PRK00147.1"/>
    <property type="match status" value="1"/>
</dbReference>
<dbReference type="NCBIfam" id="TIGR00113">
    <property type="entry name" value="queA"/>
    <property type="match status" value="1"/>
</dbReference>
<dbReference type="PANTHER" id="PTHR30307">
    <property type="entry name" value="S-ADENOSYLMETHIONINE:TRNA RIBOSYLTRANSFERASE-ISOMERASE"/>
    <property type="match status" value="1"/>
</dbReference>
<dbReference type="PANTHER" id="PTHR30307:SF0">
    <property type="entry name" value="S-ADENOSYLMETHIONINE:TRNA RIBOSYLTRANSFERASE-ISOMERASE"/>
    <property type="match status" value="1"/>
</dbReference>
<dbReference type="Pfam" id="PF02547">
    <property type="entry name" value="Queuosine_synth"/>
    <property type="match status" value="1"/>
</dbReference>
<dbReference type="SUPFAM" id="SSF111337">
    <property type="entry name" value="QueA-like"/>
    <property type="match status" value="1"/>
</dbReference>
<keyword id="KW-0963">Cytoplasm</keyword>
<keyword id="KW-0671">Queuosine biosynthesis</keyword>
<keyword id="KW-1185">Reference proteome</keyword>
<keyword id="KW-0949">S-adenosyl-L-methionine</keyword>
<keyword id="KW-0808">Transferase</keyword>
<name>QUEA_METSB</name>
<evidence type="ECO:0000255" key="1">
    <source>
        <dbReference type="HAMAP-Rule" id="MF_00113"/>
    </source>
</evidence>
<accession>B8EIV1</accession>
<organism>
    <name type="scientific">Methylocella silvestris (strain DSM 15510 / CIP 108128 / LMG 27833 / NCIMB 13906 / BL2)</name>
    <dbReference type="NCBI Taxonomy" id="395965"/>
    <lineage>
        <taxon>Bacteria</taxon>
        <taxon>Pseudomonadati</taxon>
        <taxon>Pseudomonadota</taxon>
        <taxon>Alphaproteobacteria</taxon>
        <taxon>Hyphomicrobiales</taxon>
        <taxon>Beijerinckiaceae</taxon>
        <taxon>Methylocella</taxon>
    </lineage>
</organism>
<comment type="function">
    <text evidence="1">Transfers and isomerizes the ribose moiety from AdoMet to the 7-aminomethyl group of 7-deazaguanine (preQ1-tRNA) to give epoxyqueuosine (oQ-tRNA).</text>
</comment>
<comment type="catalytic activity">
    <reaction evidence="1">
        <text>7-aminomethyl-7-carbaguanosine(34) in tRNA + S-adenosyl-L-methionine = epoxyqueuosine(34) in tRNA + adenine + L-methionine + 2 H(+)</text>
        <dbReference type="Rhea" id="RHEA:32155"/>
        <dbReference type="Rhea" id="RHEA-COMP:10342"/>
        <dbReference type="Rhea" id="RHEA-COMP:18582"/>
        <dbReference type="ChEBI" id="CHEBI:15378"/>
        <dbReference type="ChEBI" id="CHEBI:16708"/>
        <dbReference type="ChEBI" id="CHEBI:57844"/>
        <dbReference type="ChEBI" id="CHEBI:59789"/>
        <dbReference type="ChEBI" id="CHEBI:82833"/>
        <dbReference type="ChEBI" id="CHEBI:194443"/>
        <dbReference type="EC" id="2.4.99.17"/>
    </reaction>
</comment>
<comment type="pathway">
    <text evidence="1">tRNA modification; tRNA-queuosine biosynthesis.</text>
</comment>
<comment type="subunit">
    <text evidence="1">Monomer.</text>
</comment>
<comment type="subcellular location">
    <subcellularLocation>
        <location evidence="1">Cytoplasm</location>
    </subcellularLocation>
</comment>
<comment type="similarity">
    <text evidence="1">Belongs to the QueA family.</text>
</comment>
<gene>
    <name evidence="1" type="primary">queA</name>
    <name type="ordered locus">Msil_3554</name>
</gene>
<feature type="chain" id="PRO_1000119160" description="S-adenosylmethionine:tRNA ribosyltransferase-isomerase">
    <location>
        <begin position="1"/>
        <end position="361"/>
    </location>
</feature>
<protein>
    <recommendedName>
        <fullName evidence="1">S-adenosylmethionine:tRNA ribosyltransferase-isomerase</fullName>
        <ecNumber evidence="1">2.4.99.17</ecNumber>
    </recommendedName>
    <alternativeName>
        <fullName evidence="1">Queuosine biosynthesis protein QueA</fullName>
    </alternativeName>
</protein>
<sequence>MRVDQFDFDLPDASIALRPAHPRDAARLLVVRPGRLSPAALDDRFIRDLPELLAAGDVLVVNDTRVIPARLDGFRARGEALARIEATLHKREGGDLWRAFLRPAKKLRAGETILFSSGDAKLAARVVEKGEDGEVLLGFELSGAELDLALERVGRMPLPPYISSKRGADESDAADYQTLFADRPGAVAAPTASLHFTPALLAALVAKGVQIERVTLHVGAGTFLPVKAEDTDDHRMHAEWGEVSAETAGALNAARRAGRRVVAAGTTSLRILESAAGPDGAVAAFSGDTSIFITPGYSFKAVDLLLTNFHLPRSTLFMLVCAFSGLQTMRDAYNHAIAAGYRFYSYGDACLLYPAAPRGAA</sequence>
<proteinExistence type="inferred from homology"/>